<organism>
    <name type="scientific">Oryza sativa subsp. japonica</name>
    <name type="common">Rice</name>
    <dbReference type="NCBI Taxonomy" id="39947"/>
    <lineage>
        <taxon>Eukaryota</taxon>
        <taxon>Viridiplantae</taxon>
        <taxon>Streptophyta</taxon>
        <taxon>Embryophyta</taxon>
        <taxon>Tracheophyta</taxon>
        <taxon>Spermatophyta</taxon>
        <taxon>Magnoliopsida</taxon>
        <taxon>Liliopsida</taxon>
        <taxon>Poales</taxon>
        <taxon>Poaceae</taxon>
        <taxon>BOP clade</taxon>
        <taxon>Oryzoideae</taxon>
        <taxon>Oryzeae</taxon>
        <taxon>Oryzinae</taxon>
        <taxon>Oryza</taxon>
        <taxon>Oryza sativa</taxon>
    </lineage>
</organism>
<feature type="chain" id="PRO_0000395767" description="Lon protease homolog, mitochondrial">
    <location>
        <begin position="1"/>
        <end position="1002"/>
    </location>
</feature>
<feature type="domain" description="Lon N-terminal" evidence="3">
    <location>
        <begin position="102"/>
        <end position="313"/>
    </location>
</feature>
<feature type="domain" description="Lon proteolytic" evidence="2">
    <location>
        <begin position="811"/>
        <end position="995"/>
    </location>
</feature>
<feature type="active site" evidence="1">
    <location>
        <position position="901"/>
    </location>
</feature>
<feature type="active site" evidence="1">
    <location>
        <position position="944"/>
    </location>
</feature>
<feature type="binding site" evidence="1">
    <location>
        <begin position="468"/>
        <end position="475"/>
    </location>
    <ligand>
        <name>ATP</name>
        <dbReference type="ChEBI" id="CHEBI:30616"/>
    </ligand>
</feature>
<feature type="splice variant" id="VSP_039541" description="In isoform 2." evidence="4">
    <location>
        <begin position="742"/>
        <end position="767"/>
    </location>
</feature>
<comment type="function">
    <text evidence="1">ATP-dependent serine protease that mediates the selective degradation of misfolded, unassembled or oxidatively damaged polypeptides as well as certain short-lived regulatory proteins in the mitochondrial matrix. May also have a chaperone function in the assembly of inner membrane protein complexes. Participates in the regulation of mitochondrial gene expression and in the maintenance of the integrity of the mitochondrial genome. Binds to mitochondrial DNA in a site-specific manner.</text>
</comment>
<comment type="catalytic activity">
    <reaction evidence="1">
        <text>Hydrolysis of proteins in presence of ATP.</text>
        <dbReference type="EC" id="3.4.21.53"/>
    </reaction>
</comment>
<comment type="subunit">
    <text evidence="1">Homohexamer or homoheptamer. Organized in a ring with a central cavity.</text>
</comment>
<comment type="subcellular location">
    <subcellularLocation>
        <location evidence="1">Mitochondrion matrix</location>
    </subcellularLocation>
</comment>
<comment type="alternative products">
    <event type="alternative splicing"/>
    <isoform>
        <id>Q69UZ3-1</id>
        <name>1</name>
        <sequence type="displayed"/>
    </isoform>
    <isoform>
        <id>Q69UZ3-2</id>
        <name>2</name>
        <sequence type="described" ref="VSP_039541"/>
    </isoform>
</comment>
<comment type="miscellaneous">
    <text evidence="1">This protein may be expected to contain an N-terminal transit peptide but none has been predicted.</text>
</comment>
<comment type="similarity">
    <text evidence="1">Belongs to the peptidase S16 family.</text>
</comment>
<comment type="sequence caution" evidence="4">
    <conflict type="erroneous termination">
        <sequence resource="EMBL" id="AK068511"/>
    </conflict>
    <text>Truncated C-terminus.</text>
</comment>
<gene>
    <name type="ordered locus">Os07g0689300</name>
    <name type="ordered locus">LOC_Os07g48960</name>
    <name type="ORF">OJ1165_F02.125</name>
    <name type="ORF">P0597G07.108</name>
</gene>
<reference key="1">
    <citation type="journal article" date="2005" name="Nature">
        <title>The map-based sequence of the rice genome.</title>
        <authorList>
            <consortium name="International rice genome sequencing project (IRGSP)"/>
        </authorList>
    </citation>
    <scope>NUCLEOTIDE SEQUENCE [LARGE SCALE GENOMIC DNA]</scope>
    <source>
        <strain>cv. Nipponbare</strain>
    </source>
</reference>
<reference key="2">
    <citation type="journal article" date="2008" name="Nucleic Acids Res.">
        <title>The rice annotation project database (RAP-DB): 2008 update.</title>
        <authorList>
            <consortium name="The rice annotation project (RAP)"/>
        </authorList>
    </citation>
    <scope>GENOME REANNOTATION</scope>
    <source>
        <strain>cv. Nipponbare</strain>
    </source>
</reference>
<reference key="3">
    <citation type="journal article" date="2013" name="Rice">
        <title>Improvement of the Oryza sativa Nipponbare reference genome using next generation sequence and optical map data.</title>
        <authorList>
            <person name="Kawahara Y."/>
            <person name="de la Bastide M."/>
            <person name="Hamilton J.P."/>
            <person name="Kanamori H."/>
            <person name="McCombie W.R."/>
            <person name="Ouyang S."/>
            <person name="Schwartz D.C."/>
            <person name="Tanaka T."/>
            <person name="Wu J."/>
            <person name="Zhou S."/>
            <person name="Childs K.L."/>
            <person name="Davidson R.M."/>
            <person name="Lin H."/>
            <person name="Quesada-Ocampo L."/>
            <person name="Vaillancourt B."/>
            <person name="Sakai H."/>
            <person name="Lee S.S."/>
            <person name="Kim J."/>
            <person name="Numa H."/>
            <person name="Itoh T."/>
            <person name="Buell C.R."/>
            <person name="Matsumoto T."/>
        </authorList>
    </citation>
    <scope>GENOME REANNOTATION</scope>
    <source>
        <strain>cv. Nipponbare</strain>
    </source>
</reference>
<reference key="4">
    <citation type="journal article" date="2003" name="Science">
        <title>Collection, mapping, and annotation of over 28,000 cDNA clones from japonica rice.</title>
        <authorList>
            <consortium name="The rice full-length cDNA consortium"/>
        </authorList>
    </citation>
    <scope>NUCLEOTIDE SEQUENCE [LARGE SCALE MRNA] OF 531-1002 (ISOFORM 1)</scope>
    <source>
        <strain>cv. Nipponbare</strain>
    </source>
</reference>
<sequence>MLRAAAAAAAVFPSRFAAAPAVAAVEEVRSPLLRVLGALRGGRVSTLGRRARFCSNSAGSDSEAAAAEAKAEDAVAAEGEADGKASSAIVPTVLRPEDCLSVIALPLPHRPLFPGFYMPIYVKDQKLLQALVENRKRSIPYAGAFLVKDEEGTDPNIVTSSDSDKSIDDLKGKELLQRLNEVGTLAQITSIQGDQVVLLGHRRLKITEMVQEDPLTVKVDHLKEKPYDKDDDVIKATSFEVISTLREVLKASSLWKDHVQTYTQHMGDFNYPRLADFGAAISGANKFLCQEVLEELDVYKRLKLTLELVKKEMEISKLQQSIAKAIEEKISGDQRRYLLNEQLKAIKKELGLETDDKTALSAKFRERIEAKKEKCPAHVLQVIEEELTKLQLLEASSSEFNVTRNYLDWLTVLPWGNYSDENFDVHHAQQILDEDHYGLSDVKERILEFIAVGKLRGTSQGKIICLSGPPGVGKTSIGRSIARALNRKFYRFSVGGLADVAEIKGHRRTYVGAMPGKMVQCLKSVGTANPLVLIDEIDKLGRGHSGDPASALLELLDPEQNVNFLDHYLDVPIDLSKVLFVCTANVIEMIPNPLLDRMEIIAIAGYITDEKMHIARDYLEKNTREACGIKPEQAEVTDAALLALIESYCREAGVRNLQKQIEKIYRKIALQLVRQGVSNEPTQEAAIVTASEEPNGGDSANKLKDETMEDPATENAAMTNADTASKEASELDLLNRTVDHDVHPAETPKEAVLTDSALSTDKLCTPEGNKDMEGAKEESADKAVEKVVIDSSNLGDYVGKPVFQAERIYEQTPVGVVMGLAWTAMGGSTLYIETTKVEEGDGKGALVMTGQLGDVMKESAQIAHTVGRAILLDKEPENLFFANSKVHLHVPAGSTPKDGPSAGCTMITSMLSLAMGKPVKKDLAMTGEVTLTGRILPIGGVKEKTIAARRSAVKTIVFPAANKRDFDELAPNVKEGLEVHFVDTYNEIFDIAFQSETQTETS</sequence>
<keyword id="KW-0025">Alternative splicing</keyword>
<keyword id="KW-0067">ATP-binding</keyword>
<keyword id="KW-0238">DNA-binding</keyword>
<keyword id="KW-0378">Hydrolase</keyword>
<keyword id="KW-0496">Mitochondrion</keyword>
<keyword id="KW-0547">Nucleotide-binding</keyword>
<keyword id="KW-0645">Protease</keyword>
<keyword id="KW-1185">Reference proteome</keyword>
<keyword id="KW-0720">Serine protease</keyword>
<protein>
    <recommendedName>
        <fullName evidence="1">Lon protease homolog, mitochondrial</fullName>
        <ecNumber evidence="1">3.4.21.53</ecNumber>
    </recommendedName>
</protein>
<name>LONM_ORYSJ</name>
<accession>Q69UZ3</accession>
<accession>C7J5E5</accession>
<evidence type="ECO:0000255" key="1">
    <source>
        <dbReference type="HAMAP-Rule" id="MF_03120"/>
    </source>
</evidence>
<evidence type="ECO:0000255" key="2">
    <source>
        <dbReference type="PROSITE-ProRule" id="PRU01122"/>
    </source>
</evidence>
<evidence type="ECO:0000255" key="3">
    <source>
        <dbReference type="PROSITE-ProRule" id="PRU01123"/>
    </source>
</evidence>
<evidence type="ECO:0000305" key="4"/>
<dbReference type="EC" id="3.4.21.53" evidence="1"/>
<dbReference type="EMBL" id="AP003816">
    <property type="protein sequence ID" value="BAD30304.1"/>
    <property type="molecule type" value="Genomic_DNA"/>
</dbReference>
<dbReference type="EMBL" id="AP004316">
    <property type="protein sequence ID" value="BAD30597.1"/>
    <property type="molecule type" value="Genomic_DNA"/>
</dbReference>
<dbReference type="EMBL" id="AP008213">
    <property type="protein sequence ID" value="BAH94072.1"/>
    <property type="molecule type" value="Genomic_DNA"/>
</dbReference>
<dbReference type="EMBL" id="AP014963">
    <property type="status" value="NOT_ANNOTATED_CDS"/>
    <property type="molecule type" value="Genomic_DNA"/>
</dbReference>
<dbReference type="EMBL" id="AK068511">
    <property type="status" value="NOT_ANNOTATED_CDS"/>
    <property type="molecule type" value="mRNA"/>
</dbReference>
<dbReference type="RefSeq" id="XP_015647418.1">
    <property type="nucleotide sequence ID" value="XM_015791932.1"/>
</dbReference>
<dbReference type="SMR" id="Q69UZ3"/>
<dbReference type="FunCoup" id="Q69UZ3">
    <property type="interactions" value="2350"/>
</dbReference>
<dbReference type="STRING" id="39947.Q69UZ3"/>
<dbReference type="PaxDb" id="39947-Q69UZ3"/>
<dbReference type="KEGG" id="dosa:Os07g0689300"/>
<dbReference type="eggNOG" id="KOG2004">
    <property type="taxonomic scope" value="Eukaryota"/>
</dbReference>
<dbReference type="HOGENOM" id="CLU_004109_0_1_1"/>
<dbReference type="InParanoid" id="Q69UZ3"/>
<dbReference type="OrthoDB" id="2411602at2759"/>
<dbReference type="Proteomes" id="UP000000763">
    <property type="component" value="Chromosome 7"/>
</dbReference>
<dbReference type="Proteomes" id="UP000059680">
    <property type="component" value="Chromosome 7"/>
</dbReference>
<dbReference type="GO" id="GO:0005759">
    <property type="term" value="C:mitochondrial matrix"/>
    <property type="evidence" value="ECO:0000318"/>
    <property type="project" value="GO_Central"/>
</dbReference>
<dbReference type="GO" id="GO:0005524">
    <property type="term" value="F:ATP binding"/>
    <property type="evidence" value="ECO:0007669"/>
    <property type="project" value="UniProtKB-UniRule"/>
</dbReference>
<dbReference type="GO" id="GO:0016887">
    <property type="term" value="F:ATP hydrolysis activity"/>
    <property type="evidence" value="ECO:0007669"/>
    <property type="project" value="UniProtKB-UniRule"/>
</dbReference>
<dbReference type="GO" id="GO:0004176">
    <property type="term" value="F:ATP-dependent peptidase activity"/>
    <property type="evidence" value="ECO:0000318"/>
    <property type="project" value="GO_Central"/>
</dbReference>
<dbReference type="GO" id="GO:0043565">
    <property type="term" value="F:sequence-specific DNA binding"/>
    <property type="evidence" value="ECO:0007669"/>
    <property type="project" value="UniProtKB-UniRule"/>
</dbReference>
<dbReference type="GO" id="GO:0004252">
    <property type="term" value="F:serine-type endopeptidase activity"/>
    <property type="evidence" value="ECO:0007669"/>
    <property type="project" value="UniProtKB-UniRule"/>
</dbReference>
<dbReference type="GO" id="GO:0003697">
    <property type="term" value="F:single-stranded DNA binding"/>
    <property type="evidence" value="ECO:0000318"/>
    <property type="project" value="GO_Central"/>
</dbReference>
<dbReference type="GO" id="GO:0034599">
    <property type="term" value="P:cellular response to oxidative stress"/>
    <property type="evidence" value="ECO:0007669"/>
    <property type="project" value="UniProtKB-UniRule"/>
</dbReference>
<dbReference type="GO" id="GO:0051131">
    <property type="term" value="P:chaperone-mediated protein complex assembly"/>
    <property type="evidence" value="ECO:0000318"/>
    <property type="project" value="GO_Central"/>
</dbReference>
<dbReference type="GO" id="GO:0007005">
    <property type="term" value="P:mitochondrion organization"/>
    <property type="evidence" value="ECO:0000318"/>
    <property type="project" value="GO_Central"/>
</dbReference>
<dbReference type="GO" id="GO:0070407">
    <property type="term" value="P:oxidation-dependent protein catabolic process"/>
    <property type="evidence" value="ECO:0007669"/>
    <property type="project" value="UniProtKB-UniRule"/>
</dbReference>
<dbReference type="GO" id="GO:0006515">
    <property type="term" value="P:protein quality control for misfolded or incompletely synthesized proteins"/>
    <property type="evidence" value="ECO:0000318"/>
    <property type="project" value="GO_Central"/>
</dbReference>
<dbReference type="CDD" id="cd19500">
    <property type="entry name" value="RecA-like_Lon"/>
    <property type="match status" value="1"/>
</dbReference>
<dbReference type="FunFam" id="3.40.50.300:FF:000021">
    <property type="entry name" value="Lon protease homolog"/>
    <property type="match status" value="1"/>
</dbReference>
<dbReference type="FunFam" id="1.10.8.60:FF:000080">
    <property type="entry name" value="Lon protease homolog, mitochondrial"/>
    <property type="match status" value="1"/>
</dbReference>
<dbReference type="FunFam" id="1.20.5.5270:FF:000001">
    <property type="entry name" value="Lon protease homolog, mitochondrial"/>
    <property type="match status" value="1"/>
</dbReference>
<dbReference type="FunFam" id="1.20.58.1480:FF:000006">
    <property type="entry name" value="Lon protease homolog, mitochondrial"/>
    <property type="match status" value="1"/>
</dbReference>
<dbReference type="FunFam" id="2.30.130.40:FF:000007">
    <property type="entry name" value="Lon protease homolog, mitochondrial"/>
    <property type="match status" value="1"/>
</dbReference>
<dbReference type="FunFam" id="3.30.230.10:FF:000015">
    <property type="entry name" value="Lon protease homolog, mitochondrial"/>
    <property type="match status" value="1"/>
</dbReference>
<dbReference type="Gene3D" id="1.10.8.60">
    <property type="match status" value="1"/>
</dbReference>
<dbReference type="Gene3D" id="1.20.5.5270">
    <property type="match status" value="1"/>
</dbReference>
<dbReference type="Gene3D" id="1.20.58.1480">
    <property type="match status" value="1"/>
</dbReference>
<dbReference type="Gene3D" id="3.30.230.10">
    <property type="match status" value="1"/>
</dbReference>
<dbReference type="Gene3D" id="2.30.130.40">
    <property type="entry name" value="LON domain-like"/>
    <property type="match status" value="1"/>
</dbReference>
<dbReference type="Gene3D" id="3.40.50.300">
    <property type="entry name" value="P-loop containing nucleotide triphosphate hydrolases"/>
    <property type="match status" value="1"/>
</dbReference>
<dbReference type="HAMAP" id="MF_03120">
    <property type="entry name" value="lonm_euk"/>
    <property type="match status" value="1"/>
</dbReference>
<dbReference type="InterPro" id="IPR003593">
    <property type="entry name" value="AAA+_ATPase"/>
</dbReference>
<dbReference type="InterPro" id="IPR003959">
    <property type="entry name" value="ATPase_AAA_core"/>
</dbReference>
<dbReference type="InterPro" id="IPR004815">
    <property type="entry name" value="Lon_bac/euk-typ"/>
</dbReference>
<dbReference type="InterPro" id="IPR054594">
    <property type="entry name" value="Lon_lid"/>
</dbReference>
<dbReference type="InterPro" id="IPR008269">
    <property type="entry name" value="Lon_proteolytic"/>
</dbReference>
<dbReference type="InterPro" id="IPR027065">
    <property type="entry name" value="Lon_Prtase"/>
</dbReference>
<dbReference type="InterPro" id="IPR003111">
    <property type="entry name" value="Lon_prtase_N"/>
</dbReference>
<dbReference type="InterPro" id="IPR046336">
    <property type="entry name" value="Lon_prtase_N_sf"/>
</dbReference>
<dbReference type="InterPro" id="IPR027503">
    <property type="entry name" value="Lonm_euk"/>
</dbReference>
<dbReference type="InterPro" id="IPR027417">
    <property type="entry name" value="P-loop_NTPase"/>
</dbReference>
<dbReference type="InterPro" id="IPR008268">
    <property type="entry name" value="Peptidase_S16_AS"/>
</dbReference>
<dbReference type="InterPro" id="IPR015947">
    <property type="entry name" value="PUA-like_sf"/>
</dbReference>
<dbReference type="InterPro" id="IPR020568">
    <property type="entry name" value="Ribosomal_Su5_D2-typ_SF"/>
</dbReference>
<dbReference type="InterPro" id="IPR014721">
    <property type="entry name" value="Ribsml_uS5_D2-typ_fold_subgr"/>
</dbReference>
<dbReference type="NCBIfam" id="TIGR00763">
    <property type="entry name" value="lon"/>
    <property type="match status" value="1"/>
</dbReference>
<dbReference type="PANTHER" id="PTHR43718">
    <property type="entry name" value="LON PROTEASE"/>
    <property type="match status" value="1"/>
</dbReference>
<dbReference type="PANTHER" id="PTHR43718:SF2">
    <property type="entry name" value="LON PROTEASE HOMOLOG, MITOCHONDRIAL"/>
    <property type="match status" value="1"/>
</dbReference>
<dbReference type="Pfam" id="PF00004">
    <property type="entry name" value="AAA"/>
    <property type="match status" value="1"/>
</dbReference>
<dbReference type="Pfam" id="PF05362">
    <property type="entry name" value="Lon_C"/>
    <property type="match status" value="1"/>
</dbReference>
<dbReference type="Pfam" id="PF22667">
    <property type="entry name" value="Lon_lid"/>
    <property type="match status" value="1"/>
</dbReference>
<dbReference type="Pfam" id="PF02190">
    <property type="entry name" value="LON_substr_bdg"/>
    <property type="match status" value="1"/>
</dbReference>
<dbReference type="PRINTS" id="PR00830">
    <property type="entry name" value="ENDOLAPTASE"/>
</dbReference>
<dbReference type="SMART" id="SM00382">
    <property type="entry name" value="AAA"/>
    <property type="match status" value="1"/>
</dbReference>
<dbReference type="SMART" id="SM00464">
    <property type="entry name" value="LON"/>
    <property type="match status" value="1"/>
</dbReference>
<dbReference type="SUPFAM" id="SSF52540">
    <property type="entry name" value="P-loop containing nucleoside triphosphate hydrolases"/>
    <property type="match status" value="1"/>
</dbReference>
<dbReference type="SUPFAM" id="SSF88697">
    <property type="entry name" value="PUA domain-like"/>
    <property type="match status" value="1"/>
</dbReference>
<dbReference type="SUPFAM" id="SSF54211">
    <property type="entry name" value="Ribosomal protein S5 domain 2-like"/>
    <property type="match status" value="1"/>
</dbReference>
<dbReference type="PROSITE" id="PS51787">
    <property type="entry name" value="LON_N"/>
    <property type="match status" value="1"/>
</dbReference>
<dbReference type="PROSITE" id="PS51786">
    <property type="entry name" value="LON_PROTEOLYTIC"/>
    <property type="match status" value="1"/>
</dbReference>
<dbReference type="PROSITE" id="PS01046">
    <property type="entry name" value="LON_SER"/>
    <property type="match status" value="1"/>
</dbReference>
<proteinExistence type="evidence at transcript level"/>